<organism>
    <name type="scientific">Kluyveromyces lactis (strain ATCC 8585 / CBS 2359 / DSM 70799 / NBRC 1267 / NRRL Y-1140 / WM37)</name>
    <name type="common">Yeast</name>
    <name type="synonym">Candida sphaerica</name>
    <dbReference type="NCBI Taxonomy" id="284590"/>
    <lineage>
        <taxon>Eukaryota</taxon>
        <taxon>Fungi</taxon>
        <taxon>Dikarya</taxon>
        <taxon>Ascomycota</taxon>
        <taxon>Saccharomycotina</taxon>
        <taxon>Saccharomycetes</taxon>
        <taxon>Saccharomycetales</taxon>
        <taxon>Saccharomycetaceae</taxon>
        <taxon>Kluyveromyces</taxon>
    </lineage>
</organism>
<feature type="chain" id="PRO_0000343047" description="Golgi apparatus membrane protein TVP23">
    <location>
        <begin position="1"/>
        <end position="195"/>
    </location>
</feature>
<feature type="transmembrane region" description="Helical" evidence="2">
    <location>
        <begin position="12"/>
        <end position="34"/>
    </location>
</feature>
<feature type="transmembrane region" description="Helical" evidence="2">
    <location>
        <begin position="39"/>
        <end position="61"/>
    </location>
</feature>
<feature type="transmembrane region" description="Helical" evidence="2">
    <location>
        <begin position="109"/>
        <end position="128"/>
    </location>
</feature>
<feature type="transmembrane region" description="Helical" evidence="2">
    <location>
        <begin position="132"/>
        <end position="154"/>
    </location>
</feature>
<sequence>MDSARNFYKTILASSHPLILTIHLLGKAVPIVFYLLGSWFLSSTVQFIIVILTLAADFYFTKNINGRKLIQQRWWYDVSGEDTTTFRFESFKEYPDVAAAPINPIDSKLFWLSLYVAPTIWVVFGFLCLIKFQFVYLILVIFAGGLNLWNAYAYRLCDQWEPGHTAEAPLFQLPMLPSFANLDRVTRLQSFFTRS</sequence>
<name>TVP23_KLULA</name>
<reference key="1">
    <citation type="journal article" date="2004" name="Nature">
        <title>Genome evolution in yeasts.</title>
        <authorList>
            <person name="Dujon B."/>
            <person name="Sherman D."/>
            <person name="Fischer G."/>
            <person name="Durrens P."/>
            <person name="Casaregola S."/>
            <person name="Lafontaine I."/>
            <person name="de Montigny J."/>
            <person name="Marck C."/>
            <person name="Neuveglise C."/>
            <person name="Talla E."/>
            <person name="Goffard N."/>
            <person name="Frangeul L."/>
            <person name="Aigle M."/>
            <person name="Anthouard V."/>
            <person name="Babour A."/>
            <person name="Barbe V."/>
            <person name="Barnay S."/>
            <person name="Blanchin S."/>
            <person name="Beckerich J.-M."/>
            <person name="Beyne E."/>
            <person name="Bleykasten C."/>
            <person name="Boisrame A."/>
            <person name="Boyer J."/>
            <person name="Cattolico L."/>
            <person name="Confanioleri F."/>
            <person name="de Daruvar A."/>
            <person name="Despons L."/>
            <person name="Fabre E."/>
            <person name="Fairhead C."/>
            <person name="Ferry-Dumazet H."/>
            <person name="Groppi A."/>
            <person name="Hantraye F."/>
            <person name="Hennequin C."/>
            <person name="Jauniaux N."/>
            <person name="Joyet P."/>
            <person name="Kachouri R."/>
            <person name="Kerrest A."/>
            <person name="Koszul R."/>
            <person name="Lemaire M."/>
            <person name="Lesur I."/>
            <person name="Ma L."/>
            <person name="Muller H."/>
            <person name="Nicaud J.-M."/>
            <person name="Nikolski M."/>
            <person name="Oztas S."/>
            <person name="Ozier-Kalogeropoulos O."/>
            <person name="Pellenz S."/>
            <person name="Potier S."/>
            <person name="Richard G.-F."/>
            <person name="Straub M.-L."/>
            <person name="Suleau A."/>
            <person name="Swennen D."/>
            <person name="Tekaia F."/>
            <person name="Wesolowski-Louvel M."/>
            <person name="Westhof E."/>
            <person name="Wirth B."/>
            <person name="Zeniou-Meyer M."/>
            <person name="Zivanovic Y."/>
            <person name="Bolotin-Fukuhara M."/>
            <person name="Thierry A."/>
            <person name="Bouchier C."/>
            <person name="Caudron B."/>
            <person name="Scarpelli C."/>
            <person name="Gaillardin C."/>
            <person name="Weissenbach J."/>
            <person name="Wincker P."/>
            <person name="Souciet J.-L."/>
        </authorList>
    </citation>
    <scope>NUCLEOTIDE SEQUENCE [LARGE SCALE GENOMIC DNA]</scope>
    <source>
        <strain>ATCC 8585 / CBS 2359 / DSM 70799 / NBRC 1267 / NRRL Y-1140 / WM37</strain>
    </source>
</reference>
<accession>Q6CTK9</accession>
<gene>
    <name type="primary">TVP23</name>
    <name type="ordered locus">KLLA0C11869g</name>
</gene>
<protein>
    <recommendedName>
        <fullName>Golgi apparatus membrane protein TVP23</fullName>
    </recommendedName>
</protein>
<comment type="function">
    <text evidence="1">Golgi membrane protein involved in vesicular trafficking.</text>
</comment>
<comment type="subcellular location">
    <subcellularLocation>
        <location evidence="1">Golgi apparatus membrane</location>
        <topology evidence="1">Multi-pass membrane protein</topology>
    </subcellularLocation>
</comment>
<comment type="similarity">
    <text evidence="3">Belongs to the TVP23 family.</text>
</comment>
<dbReference type="EMBL" id="CR382123">
    <property type="protein sequence ID" value="CAH01581.1"/>
    <property type="molecule type" value="Genomic_DNA"/>
</dbReference>
<dbReference type="RefSeq" id="XP_452730.1">
    <property type="nucleotide sequence ID" value="XM_452730.1"/>
</dbReference>
<dbReference type="FunCoup" id="Q6CTK9">
    <property type="interactions" value="420"/>
</dbReference>
<dbReference type="STRING" id="284590.Q6CTK9"/>
<dbReference type="PaxDb" id="284590-Q6CTK9"/>
<dbReference type="KEGG" id="kla:KLLA0_C11869g"/>
<dbReference type="eggNOG" id="KOG3195">
    <property type="taxonomic scope" value="Eukaryota"/>
</dbReference>
<dbReference type="HOGENOM" id="CLU_1190470_0_0_1"/>
<dbReference type="InParanoid" id="Q6CTK9"/>
<dbReference type="OMA" id="KMIWWID"/>
<dbReference type="Proteomes" id="UP000000598">
    <property type="component" value="Chromosome C"/>
</dbReference>
<dbReference type="GO" id="GO:0000139">
    <property type="term" value="C:Golgi membrane"/>
    <property type="evidence" value="ECO:0007669"/>
    <property type="project" value="UniProtKB-SubCell"/>
</dbReference>
<dbReference type="GO" id="GO:0009306">
    <property type="term" value="P:protein secretion"/>
    <property type="evidence" value="ECO:0007669"/>
    <property type="project" value="TreeGrafter"/>
</dbReference>
<dbReference type="GO" id="GO:0016192">
    <property type="term" value="P:vesicle-mediated transport"/>
    <property type="evidence" value="ECO:0007669"/>
    <property type="project" value="TreeGrafter"/>
</dbReference>
<dbReference type="InterPro" id="IPR008564">
    <property type="entry name" value="TVP23-like"/>
</dbReference>
<dbReference type="PANTHER" id="PTHR13019">
    <property type="entry name" value="GOLGI APPARATUS MEMBRANE PROTEIN TVP23"/>
    <property type="match status" value="1"/>
</dbReference>
<dbReference type="PANTHER" id="PTHR13019:SF7">
    <property type="entry name" value="GOLGI APPARATUS MEMBRANE PROTEIN TVP23"/>
    <property type="match status" value="1"/>
</dbReference>
<dbReference type="Pfam" id="PF05832">
    <property type="entry name" value="DUF846"/>
    <property type="match status" value="1"/>
</dbReference>
<proteinExistence type="inferred from homology"/>
<keyword id="KW-0333">Golgi apparatus</keyword>
<keyword id="KW-0472">Membrane</keyword>
<keyword id="KW-1185">Reference proteome</keyword>
<keyword id="KW-0812">Transmembrane</keyword>
<keyword id="KW-1133">Transmembrane helix</keyword>
<evidence type="ECO:0000250" key="1"/>
<evidence type="ECO:0000255" key="2"/>
<evidence type="ECO:0000305" key="3"/>